<dbReference type="EC" id="1.1.99.1" evidence="1"/>
<dbReference type="EC" id="1.2.1.8" evidence="1"/>
<dbReference type="EMBL" id="BX571857">
    <property type="protein sequence ID" value="CAG44313.1"/>
    <property type="molecule type" value="Genomic_DNA"/>
</dbReference>
<dbReference type="RefSeq" id="WP_000066517.1">
    <property type="nucleotide sequence ID" value="NC_002953.3"/>
</dbReference>
<dbReference type="SMR" id="Q6G664"/>
<dbReference type="KEGG" id="sas:SAS2497"/>
<dbReference type="HOGENOM" id="CLU_002865_7_1_9"/>
<dbReference type="UniPathway" id="UPA00529">
    <property type="reaction ID" value="UER00385"/>
</dbReference>
<dbReference type="GO" id="GO:0016020">
    <property type="term" value="C:membrane"/>
    <property type="evidence" value="ECO:0007669"/>
    <property type="project" value="TreeGrafter"/>
</dbReference>
<dbReference type="GO" id="GO:0008802">
    <property type="term" value="F:betaine-aldehyde dehydrogenase (NAD+) activity"/>
    <property type="evidence" value="ECO:0007669"/>
    <property type="project" value="UniProtKB-EC"/>
</dbReference>
<dbReference type="GO" id="GO:0008812">
    <property type="term" value="F:choline dehydrogenase activity"/>
    <property type="evidence" value="ECO:0007669"/>
    <property type="project" value="UniProtKB-UniRule"/>
</dbReference>
<dbReference type="GO" id="GO:0050660">
    <property type="term" value="F:flavin adenine dinucleotide binding"/>
    <property type="evidence" value="ECO:0007669"/>
    <property type="project" value="InterPro"/>
</dbReference>
<dbReference type="GO" id="GO:0019285">
    <property type="term" value="P:glycine betaine biosynthetic process from choline"/>
    <property type="evidence" value="ECO:0007669"/>
    <property type="project" value="UniProtKB-UniRule"/>
</dbReference>
<dbReference type="Gene3D" id="3.50.50.60">
    <property type="entry name" value="FAD/NAD(P)-binding domain"/>
    <property type="match status" value="1"/>
</dbReference>
<dbReference type="Gene3D" id="3.30.560.10">
    <property type="entry name" value="Glucose Oxidase, domain 3"/>
    <property type="match status" value="1"/>
</dbReference>
<dbReference type="HAMAP" id="MF_00750">
    <property type="entry name" value="Choline_dehydrogen"/>
    <property type="match status" value="1"/>
</dbReference>
<dbReference type="InterPro" id="IPR011533">
    <property type="entry name" value="BetA"/>
</dbReference>
<dbReference type="InterPro" id="IPR036188">
    <property type="entry name" value="FAD/NAD-bd_sf"/>
</dbReference>
<dbReference type="InterPro" id="IPR012132">
    <property type="entry name" value="GMC_OxRdtase"/>
</dbReference>
<dbReference type="InterPro" id="IPR000172">
    <property type="entry name" value="GMC_OxRdtase_N"/>
</dbReference>
<dbReference type="InterPro" id="IPR007867">
    <property type="entry name" value="GMC_OxRtase_C"/>
</dbReference>
<dbReference type="NCBIfam" id="TIGR01810">
    <property type="entry name" value="betA"/>
    <property type="match status" value="1"/>
</dbReference>
<dbReference type="NCBIfam" id="NF002550">
    <property type="entry name" value="PRK02106.1"/>
    <property type="match status" value="1"/>
</dbReference>
<dbReference type="PANTHER" id="PTHR11552:SF147">
    <property type="entry name" value="CHOLINE DEHYDROGENASE, MITOCHONDRIAL"/>
    <property type="match status" value="1"/>
</dbReference>
<dbReference type="PANTHER" id="PTHR11552">
    <property type="entry name" value="GLUCOSE-METHANOL-CHOLINE GMC OXIDOREDUCTASE"/>
    <property type="match status" value="1"/>
</dbReference>
<dbReference type="Pfam" id="PF05199">
    <property type="entry name" value="GMC_oxred_C"/>
    <property type="match status" value="1"/>
</dbReference>
<dbReference type="Pfam" id="PF00732">
    <property type="entry name" value="GMC_oxred_N"/>
    <property type="match status" value="1"/>
</dbReference>
<dbReference type="PIRSF" id="PIRSF000137">
    <property type="entry name" value="Alcohol_oxidase"/>
    <property type="match status" value="1"/>
</dbReference>
<dbReference type="SUPFAM" id="SSF54373">
    <property type="entry name" value="FAD-linked reductases, C-terminal domain"/>
    <property type="match status" value="1"/>
</dbReference>
<dbReference type="SUPFAM" id="SSF51905">
    <property type="entry name" value="FAD/NAD(P)-binding domain"/>
    <property type="match status" value="1"/>
</dbReference>
<dbReference type="PROSITE" id="PS00623">
    <property type="entry name" value="GMC_OXRED_1"/>
    <property type="match status" value="1"/>
</dbReference>
<dbReference type="PROSITE" id="PS00624">
    <property type="entry name" value="GMC_OXRED_2"/>
    <property type="match status" value="1"/>
</dbReference>
<keyword id="KW-0274">FAD</keyword>
<keyword id="KW-0285">Flavoprotein</keyword>
<keyword id="KW-0520">NAD</keyword>
<keyword id="KW-0560">Oxidoreductase</keyword>
<feature type="chain" id="PRO_0000205599" description="Oxygen-dependent choline dehydrogenase">
    <location>
        <begin position="1"/>
        <end position="569"/>
    </location>
</feature>
<feature type="active site" description="Proton acceptor" evidence="1">
    <location>
        <position position="475"/>
    </location>
</feature>
<feature type="binding site" evidence="1">
    <location>
        <begin position="9"/>
        <end position="38"/>
    </location>
    <ligand>
        <name>FAD</name>
        <dbReference type="ChEBI" id="CHEBI:57692"/>
    </ligand>
</feature>
<evidence type="ECO:0000255" key="1">
    <source>
        <dbReference type="HAMAP-Rule" id="MF_00750"/>
    </source>
</evidence>
<reference key="1">
    <citation type="journal article" date="2004" name="Proc. Natl. Acad. Sci. U.S.A.">
        <title>Complete genomes of two clinical Staphylococcus aureus strains: evidence for the rapid evolution of virulence and drug resistance.</title>
        <authorList>
            <person name="Holden M.T.G."/>
            <person name="Feil E.J."/>
            <person name="Lindsay J.A."/>
            <person name="Peacock S.J."/>
            <person name="Day N.P.J."/>
            <person name="Enright M.C."/>
            <person name="Foster T.J."/>
            <person name="Moore C.E."/>
            <person name="Hurst L."/>
            <person name="Atkin R."/>
            <person name="Barron A."/>
            <person name="Bason N."/>
            <person name="Bentley S.D."/>
            <person name="Chillingworth C."/>
            <person name="Chillingworth T."/>
            <person name="Churcher C."/>
            <person name="Clark L."/>
            <person name="Corton C."/>
            <person name="Cronin A."/>
            <person name="Doggett J."/>
            <person name="Dowd L."/>
            <person name="Feltwell T."/>
            <person name="Hance Z."/>
            <person name="Harris B."/>
            <person name="Hauser H."/>
            <person name="Holroyd S."/>
            <person name="Jagels K."/>
            <person name="James K.D."/>
            <person name="Lennard N."/>
            <person name="Line A."/>
            <person name="Mayes R."/>
            <person name="Moule S."/>
            <person name="Mungall K."/>
            <person name="Ormond D."/>
            <person name="Quail M.A."/>
            <person name="Rabbinowitsch E."/>
            <person name="Rutherford K.M."/>
            <person name="Sanders M."/>
            <person name="Sharp S."/>
            <person name="Simmonds M."/>
            <person name="Stevens K."/>
            <person name="Whitehead S."/>
            <person name="Barrell B.G."/>
            <person name="Spratt B.G."/>
            <person name="Parkhill J."/>
        </authorList>
    </citation>
    <scope>NUCLEOTIDE SEQUENCE [LARGE SCALE GENOMIC DNA]</scope>
    <source>
        <strain>MSSA476</strain>
    </source>
</reference>
<protein>
    <recommendedName>
        <fullName evidence="1">Oxygen-dependent choline dehydrogenase</fullName>
        <shortName evidence="1">CDH</shortName>
        <shortName evidence="1">CHD</shortName>
        <ecNumber evidence="1">1.1.99.1</ecNumber>
    </recommendedName>
    <alternativeName>
        <fullName evidence="1">Betaine aldehyde dehydrogenase</fullName>
        <shortName evidence="1">BADH</shortName>
        <ecNumber evidence="1">1.2.1.8</ecNumber>
    </alternativeName>
</protein>
<gene>
    <name evidence="1" type="primary">betA</name>
    <name type="ordered locus">SAS2497</name>
</gene>
<organism>
    <name type="scientific">Staphylococcus aureus (strain MSSA476)</name>
    <dbReference type="NCBI Taxonomy" id="282459"/>
    <lineage>
        <taxon>Bacteria</taxon>
        <taxon>Bacillati</taxon>
        <taxon>Bacillota</taxon>
        <taxon>Bacilli</taxon>
        <taxon>Bacillales</taxon>
        <taxon>Staphylococcaceae</taxon>
        <taxon>Staphylococcus</taxon>
    </lineage>
</organism>
<name>BETA_STAAS</name>
<sequence>MSNKNKSYDYVIIGGGSAGSVLGNRLSEDKDKEVLVLEAGRSDYFWDLFIQMPAALMFPSGNKFYDWIYSTDEEPHMGGRKVAHARGKVLGGSSSINGMIYQRGNPMDYEGWAEPEGMETWDFAHCLPYFKKLEKTYGAAPYDKFRGHDGPIKLKRGPATNPLFQSFFDAGVEAGYHKTPDVNGFRQEGFGPFDSQVHRGRRMSASRAYLHPAMKRKNLTVETRAFVTEIHYEGRRATGVTYKKNGKLHTIDAKEVILSGGAFNTPQLLQLSGIGDSEFLKSKGIEPRVHLPGVGENFEDHLEVYIQHKCKEPVSLQPSLDIKRMPFIGLQWIFTRTGAAASNHFEGGGFVRSNNEVDYPNLMFHFLPIAVRYDGQKAAVAHGYQVHVGPMYSNSRGSLKIKSKDPFEKPSIRFNYLSTEEDKKEWVEAIRVARNILSQKAMDPFNGGEISPGPEVQTDEEILDWVRRDGETALHPSCSAKMGPASDPMAVVDPLTMKVHGMENLRVVDASAMPRTTNGNIHAPVLMLAEKAADIIRGRKPLEPQYIDYYKHGVHDENEGAIEVKPYAK</sequence>
<comment type="function">
    <text evidence="1">Involved in the biosynthesis of the osmoprotectant glycine betaine. Catalyzes the oxidation of choline to betaine aldehyde and betaine aldehyde to glycine betaine at the same rate.</text>
</comment>
<comment type="catalytic activity">
    <reaction evidence="1">
        <text>choline + A = betaine aldehyde + AH2</text>
        <dbReference type="Rhea" id="RHEA:17433"/>
        <dbReference type="ChEBI" id="CHEBI:13193"/>
        <dbReference type="ChEBI" id="CHEBI:15354"/>
        <dbReference type="ChEBI" id="CHEBI:15710"/>
        <dbReference type="ChEBI" id="CHEBI:17499"/>
        <dbReference type="EC" id="1.1.99.1"/>
    </reaction>
</comment>
<comment type="catalytic activity">
    <reaction evidence="1">
        <text>betaine aldehyde + NAD(+) + H2O = glycine betaine + NADH + 2 H(+)</text>
        <dbReference type="Rhea" id="RHEA:15305"/>
        <dbReference type="ChEBI" id="CHEBI:15377"/>
        <dbReference type="ChEBI" id="CHEBI:15378"/>
        <dbReference type="ChEBI" id="CHEBI:15710"/>
        <dbReference type="ChEBI" id="CHEBI:17750"/>
        <dbReference type="ChEBI" id="CHEBI:57540"/>
        <dbReference type="ChEBI" id="CHEBI:57945"/>
        <dbReference type="EC" id="1.2.1.8"/>
    </reaction>
</comment>
<comment type="cofactor">
    <cofactor evidence="1">
        <name>FAD</name>
        <dbReference type="ChEBI" id="CHEBI:57692"/>
    </cofactor>
</comment>
<comment type="pathway">
    <text evidence="1">Amine and polyamine biosynthesis; betaine biosynthesis via choline pathway; betaine aldehyde from choline (cytochrome c reductase route): step 1/1.</text>
</comment>
<comment type="similarity">
    <text evidence="1">Belongs to the GMC oxidoreductase family.</text>
</comment>
<accession>Q6G664</accession>
<proteinExistence type="inferred from homology"/>